<evidence type="ECO:0000250" key="1"/>
<evidence type="ECO:0000255" key="2">
    <source>
        <dbReference type="PROSITE-ProRule" id="PRU01004"/>
    </source>
</evidence>
<evidence type="ECO:0000269" key="3">
    <source>
    </source>
</evidence>
<evidence type="ECO:0000305" key="4"/>
<evidence type="ECO:0007744" key="5">
    <source>
    </source>
</evidence>
<gene>
    <name type="primary">narG</name>
    <name type="ordered locus">Rv1161</name>
</gene>
<protein>
    <recommendedName>
        <fullName>Nitrate reductase alpha subunit</fullName>
        <ecNumber>1.7.5.1</ecNumber>
    </recommendedName>
</protein>
<accession>P9WJQ3</accession>
<accession>L0T628</accession>
<accession>O06559</accession>
<accession>Q7D8Q9</accession>
<comment type="function">
    <text evidence="3 4">The alpha chain is the actual site of nitrate reduction (Probable). Supports anaerobic growth of E.coli on glycerol in an E.coli mutant lacking endogenous nitrate reductase.</text>
</comment>
<comment type="catalytic activity">
    <reaction>
        <text>nitrate + a quinol = a quinone + nitrite + H2O</text>
        <dbReference type="Rhea" id="RHEA:56144"/>
        <dbReference type="ChEBI" id="CHEBI:15377"/>
        <dbReference type="ChEBI" id="CHEBI:16301"/>
        <dbReference type="ChEBI" id="CHEBI:17632"/>
        <dbReference type="ChEBI" id="CHEBI:24646"/>
        <dbReference type="ChEBI" id="CHEBI:132124"/>
        <dbReference type="EC" id="1.7.5.1"/>
    </reaction>
</comment>
<comment type="cofactor">
    <cofactor evidence="1">
        <name>[4Fe-4S] cluster</name>
        <dbReference type="ChEBI" id="CHEBI:49883"/>
    </cofactor>
    <text evidence="1">Binds 1 [4Fe-4S] cluster per subunit.</text>
</comment>
<comment type="cofactor">
    <cofactor evidence="1">
        <name>Mo-bis(molybdopterin guanine dinucleotide)</name>
        <dbReference type="ChEBI" id="CHEBI:60539"/>
    </cofactor>
    <text evidence="1">Binds 1 molybdenum-bis(molybdopterin guanine dinucleotide) (Mo-bis-MGD) cofactor per subunit.</text>
</comment>
<comment type="activity regulation">
    <text>Increased nitrate reductase activity is seen under hypoxic conditions, however this seems to be due to induction of the probable nitrate/nitrite transporter narK2 rather than increased enzyme activity.</text>
</comment>
<comment type="subcellular location">
    <subcellularLocation>
        <location>Cell membrane</location>
        <topology>Peripheral membrane protein</topology>
    </subcellularLocation>
</comment>
<comment type="induction">
    <text evidence="3">Constitutively expressed; independent of nitrate and nitrate levels.</text>
</comment>
<comment type="disruption phenotype">
    <text evidence="3">Loss of nitrate reductase activity in aerobic and hypoxic conditions.</text>
</comment>
<comment type="miscellaneous">
    <text>One of the activities induced in M.tuberculosis by hypoxia is the dissimilatory reduction of nitrate to nitrite, which serves to provide energy as the bacteria adapt to anaerobiosis.</text>
</comment>
<comment type="similarity">
    <text evidence="4">Belongs to the prokaryotic molybdopterin-containing oxidoreductase family.</text>
</comment>
<feature type="initiator methionine" description="Removed" evidence="5">
    <location>
        <position position="1"/>
    </location>
</feature>
<feature type="chain" id="PRO_0000393357" description="Nitrate reductase alpha subunit">
    <location>
        <begin position="2"/>
        <end position="1232"/>
    </location>
</feature>
<feature type="domain" description="4Fe-4S Mo/W bis-MGD-type" evidence="2">
    <location>
        <begin position="53"/>
        <end position="117"/>
    </location>
</feature>
<feature type="binding site" evidence="2">
    <location>
        <position position="60"/>
    </location>
    <ligand>
        <name>[4Fe-4S] cluster</name>
        <dbReference type="ChEBI" id="CHEBI:49883"/>
    </ligand>
</feature>
<feature type="binding site" evidence="2">
    <location>
        <position position="64"/>
    </location>
    <ligand>
        <name>[4Fe-4S] cluster</name>
        <dbReference type="ChEBI" id="CHEBI:49883"/>
    </ligand>
</feature>
<feature type="binding site" evidence="2">
    <location>
        <position position="68"/>
    </location>
    <ligand>
        <name>[4Fe-4S] cluster</name>
        <dbReference type="ChEBI" id="CHEBI:49883"/>
    </ligand>
</feature>
<feature type="binding site" evidence="2">
    <location>
        <position position="103"/>
    </location>
    <ligand>
        <name>[4Fe-4S] cluster</name>
        <dbReference type="ChEBI" id="CHEBI:49883"/>
    </ligand>
</feature>
<feature type="binding site" evidence="1">
    <location>
        <position position="233"/>
    </location>
    <ligand>
        <name>Mo-bis(molybdopterin guanine dinucleotide)</name>
        <dbReference type="ChEBI" id="CHEBI:60539"/>
    </ligand>
    <ligandPart>
        <name>Mo</name>
        <dbReference type="ChEBI" id="CHEBI:28685"/>
    </ligandPart>
</feature>
<feature type="modified residue" description="N-acetylthreonine" evidence="5">
    <location>
        <position position="2"/>
    </location>
</feature>
<sequence>MTVTPHVGGPLEELLERSGRFFTPGEFSADLRTVTRRGGREGDVFYRDRWSHDKVVRSTHGVNCTGSCSWKIYVKDGIITWETQQTDYPSVGPDRPEYEPRGCPRGASFSWYSYSPTRVRYPYARGVLVEMYREAKTRLGDPVLAWADIQADPERRRRYQQARGKGGLVRVSWAEASEMVAAAHVHTIKTYGPDRVAGFSPIPAMSMVSHAAGSRFVELIGGVMTSFYDWYADLPVASPQVFGDQTDVPESGDWWDASYLVMWGSNVPITRTPDAHWMAEARYRGAKVVVVSPDYADNTKFADEWVRCAAGTDTALAMAMGHVILSECYVRNQVPFFVDYVRRYTDLPFLIKLEKRGDLLVPGKFLTAADIGEESENAAFKPALLDELTNTVVVPQGSLGFRFGEDGVGKWNLDLGSVVPALSVEMDKAVNGDRSAELVTLPSFDTIDGHGETVSRGVPVRRAGKHLVCTVFDLMLAHYGVARAGLPGEWPTGYHDRTQQNTPAWQESITGVPAAQAIRFAKEFARNATESGGRSMIIMGGGICHWFHSDVMYRSVLALLMLTGSMGRNGGGWAHYVGQEKVRPLTGWQTMAMATDWSRPPRQVPGASYWYAHTDQWRYDGYGADKLASPVGRGRFAGKHTMDLLTSATAMGWSPFYPQFDRSSLDVADEARAAGRDVGDYVAEQLAQHKLKLSITDPDNPVNWPRVLTVWRANLIGSSGKGGEYFLRHLLGTDSNVQSDPPTDGVHPRDVVWDSDIPEGKLDLIMSIDFRMTSTTLVSDVVLPAATWYEKSDLSSTDMHPYVHSFSPAIDPPWETRSDFDAFAAIARAFSALAKRHLGTRTDVVLTALQHDTPDEMAYPDGTERDWLATGEVPVPGRTMSKLTVVERDYTAIYDKWLTLGPLIDQFGMTTKGYTVHPFREVSELAANFGVMNSGVAVGRPAITTAKRMADVILALSGTCNGRLAVEGFLELEKRTGQRLAHLAEGSEERRITYADTQARPVPVITSPEWSGSESGGRRYAPFTINIEHLKPFHTLTGRMHFYLAHDWVEELGEQLPVYRPPLDMARLFNQPELGPTDDGLGLTVRYLTPHSKWSFHSTYQDNLYMLSLSRGGPTMWMSPGDAAKINVRDNDWVEAVNANGIYVCRAIVSHRMPEGVVFVYHVQERTVDTPRTETNGKRGGNHNALTRVRIKPSHLAGGYGQHAFAFNYLGPTGNQRDEVTVVRRRSQEVRY</sequence>
<reference key="1">
    <citation type="journal article" date="1998" name="Nature">
        <title>Deciphering the biology of Mycobacterium tuberculosis from the complete genome sequence.</title>
        <authorList>
            <person name="Cole S.T."/>
            <person name="Brosch R."/>
            <person name="Parkhill J."/>
            <person name="Garnier T."/>
            <person name="Churcher C.M."/>
            <person name="Harris D.E."/>
            <person name="Gordon S.V."/>
            <person name="Eiglmeier K."/>
            <person name="Gas S."/>
            <person name="Barry C.E. III"/>
            <person name="Tekaia F."/>
            <person name="Badcock K."/>
            <person name="Basham D."/>
            <person name="Brown D."/>
            <person name="Chillingworth T."/>
            <person name="Connor R."/>
            <person name="Davies R.M."/>
            <person name="Devlin K."/>
            <person name="Feltwell T."/>
            <person name="Gentles S."/>
            <person name="Hamlin N."/>
            <person name="Holroyd S."/>
            <person name="Hornsby T."/>
            <person name="Jagels K."/>
            <person name="Krogh A."/>
            <person name="McLean J."/>
            <person name="Moule S."/>
            <person name="Murphy L.D."/>
            <person name="Oliver S."/>
            <person name="Osborne J."/>
            <person name="Quail M.A."/>
            <person name="Rajandream M.A."/>
            <person name="Rogers J."/>
            <person name="Rutter S."/>
            <person name="Seeger K."/>
            <person name="Skelton S."/>
            <person name="Squares S."/>
            <person name="Squares R."/>
            <person name="Sulston J.E."/>
            <person name="Taylor K."/>
            <person name="Whitehead S."/>
            <person name="Barrell B.G."/>
        </authorList>
    </citation>
    <scope>NUCLEOTIDE SEQUENCE [LARGE SCALE GENOMIC DNA]</scope>
    <source>
        <strain>ATCC 25618 / H37Rv</strain>
    </source>
</reference>
<reference key="2">
    <citation type="journal article" date="2003" name="J. Bacteriol.">
        <title>Role of narK2X and narGHJI in hypoxic upregulation of nitrate reduction by Mycobacterium tuberculosis.</title>
        <authorList>
            <person name="Sohaskey C.D."/>
            <person name="Wayne L.G."/>
        </authorList>
    </citation>
    <scope>INDUCTION</scope>
    <scope>FUNCTION</scope>
    <scope>DISRUPTION PHENOTYPE</scope>
    <source>
        <strain>ATCC 25618 / H37Rv</strain>
    </source>
</reference>
<reference key="3">
    <citation type="journal article" date="2011" name="Mol. Cell. Proteomics">
        <title>Proteogenomic analysis of Mycobacterium tuberculosis by high resolution mass spectrometry.</title>
        <authorList>
            <person name="Kelkar D.S."/>
            <person name="Kumar D."/>
            <person name="Kumar P."/>
            <person name="Balakrishnan L."/>
            <person name="Muthusamy B."/>
            <person name="Yadav A.K."/>
            <person name="Shrivastava P."/>
            <person name="Marimuthu A."/>
            <person name="Anand S."/>
            <person name="Sundaram H."/>
            <person name="Kingsbury R."/>
            <person name="Harsha H.C."/>
            <person name="Nair B."/>
            <person name="Prasad T.S."/>
            <person name="Chauhan D.S."/>
            <person name="Katoch K."/>
            <person name="Katoch V.M."/>
            <person name="Kumar P."/>
            <person name="Chaerkady R."/>
            <person name="Ramachandran S."/>
            <person name="Dash D."/>
            <person name="Pandey A."/>
        </authorList>
    </citation>
    <scope>ACETYLATION [LARGE SCALE ANALYSIS] AT THR-2</scope>
    <scope>CLEAVAGE OF INITIATOR METHIONINE [LARGE SCALE ANALYSIS]</scope>
    <scope>IDENTIFICATION BY MASS SPECTROMETRY [LARGE SCALE ANALYSIS]</scope>
    <source>
        <strain>ATCC 25618 / H37Rv</strain>
    </source>
</reference>
<proteinExistence type="evidence at protein level"/>
<dbReference type="EC" id="1.7.5.1"/>
<dbReference type="EMBL" id="AL123456">
    <property type="protein sequence ID" value="CCP43917.1"/>
    <property type="molecule type" value="Genomic_DNA"/>
</dbReference>
<dbReference type="PIR" id="B70556">
    <property type="entry name" value="B70556"/>
</dbReference>
<dbReference type="RefSeq" id="NP_215677.1">
    <property type="nucleotide sequence ID" value="NC_000962.3"/>
</dbReference>
<dbReference type="RefSeq" id="WP_003898748.1">
    <property type="nucleotide sequence ID" value="NZ_NVQJ01000025.1"/>
</dbReference>
<dbReference type="SMR" id="P9WJQ3"/>
<dbReference type="FunCoup" id="P9WJQ3">
    <property type="interactions" value="57"/>
</dbReference>
<dbReference type="STRING" id="83332.Rv1161"/>
<dbReference type="iPTMnet" id="P9WJQ3"/>
<dbReference type="PaxDb" id="83332-Rv1161"/>
<dbReference type="GeneID" id="885573"/>
<dbReference type="KEGG" id="mtu:Rv1161"/>
<dbReference type="KEGG" id="mtv:RVBD_1161"/>
<dbReference type="TubercuList" id="Rv1161"/>
<dbReference type="eggNOG" id="COG5013">
    <property type="taxonomic scope" value="Bacteria"/>
</dbReference>
<dbReference type="InParanoid" id="P9WJQ3"/>
<dbReference type="OrthoDB" id="9759518at2"/>
<dbReference type="PhylomeDB" id="P9WJQ3"/>
<dbReference type="BRENDA" id="1.7.5.1">
    <property type="organism ID" value="3445"/>
</dbReference>
<dbReference type="Proteomes" id="UP000001584">
    <property type="component" value="Chromosome"/>
</dbReference>
<dbReference type="GO" id="GO:0005576">
    <property type="term" value="C:extracellular region"/>
    <property type="evidence" value="ECO:0007005"/>
    <property type="project" value="MTBBASE"/>
</dbReference>
<dbReference type="GO" id="GO:0016020">
    <property type="term" value="C:membrane"/>
    <property type="evidence" value="ECO:0000318"/>
    <property type="project" value="GO_Central"/>
</dbReference>
<dbReference type="GO" id="GO:0009325">
    <property type="term" value="C:nitrate reductase complex"/>
    <property type="evidence" value="ECO:0007669"/>
    <property type="project" value="InterPro"/>
</dbReference>
<dbReference type="GO" id="GO:0009274">
    <property type="term" value="C:peptidoglycan-based cell wall"/>
    <property type="evidence" value="ECO:0007005"/>
    <property type="project" value="MTBBASE"/>
</dbReference>
<dbReference type="GO" id="GO:0005886">
    <property type="term" value="C:plasma membrane"/>
    <property type="evidence" value="ECO:0007005"/>
    <property type="project" value="MTBBASE"/>
</dbReference>
<dbReference type="GO" id="GO:0051539">
    <property type="term" value="F:4 iron, 4 sulfur cluster binding"/>
    <property type="evidence" value="ECO:0007669"/>
    <property type="project" value="UniProtKB-KW"/>
</dbReference>
<dbReference type="GO" id="GO:0046872">
    <property type="term" value="F:metal ion binding"/>
    <property type="evidence" value="ECO:0007669"/>
    <property type="project" value="UniProtKB-KW"/>
</dbReference>
<dbReference type="GO" id="GO:0043546">
    <property type="term" value="F:molybdopterin cofactor binding"/>
    <property type="evidence" value="ECO:0007669"/>
    <property type="project" value="InterPro"/>
</dbReference>
<dbReference type="GO" id="GO:0160182">
    <property type="term" value="F:nitrate reductase (quinone) activity"/>
    <property type="evidence" value="ECO:0007669"/>
    <property type="project" value="UniProtKB-EC"/>
</dbReference>
<dbReference type="GO" id="GO:0008940">
    <property type="term" value="F:nitrate reductase activity"/>
    <property type="evidence" value="ECO:0000316"/>
    <property type="project" value="UniProtKB"/>
</dbReference>
<dbReference type="GO" id="GO:0036294">
    <property type="term" value="P:cellular response to decreased oxygen levels"/>
    <property type="evidence" value="ECO:0000316"/>
    <property type="project" value="UniProtKB"/>
</dbReference>
<dbReference type="GO" id="GO:0071249">
    <property type="term" value="P:cellular response to nitrate"/>
    <property type="evidence" value="ECO:0000316"/>
    <property type="project" value="UniProtKB"/>
</dbReference>
<dbReference type="GO" id="GO:0071732">
    <property type="term" value="P:cellular response to nitric oxide"/>
    <property type="evidence" value="ECO:0000316"/>
    <property type="project" value="UniProtKB"/>
</dbReference>
<dbReference type="GO" id="GO:0042128">
    <property type="term" value="P:nitrate assimilation"/>
    <property type="evidence" value="ECO:0000315"/>
    <property type="project" value="MTBBASE"/>
</dbReference>
<dbReference type="GO" id="GO:0043602">
    <property type="term" value="P:nitrate catabolic process"/>
    <property type="evidence" value="ECO:0000315"/>
    <property type="project" value="MTBBASE"/>
</dbReference>
<dbReference type="GO" id="GO:0042126">
    <property type="term" value="P:nitrate metabolic process"/>
    <property type="evidence" value="ECO:0000316"/>
    <property type="project" value="UniProtKB"/>
</dbReference>
<dbReference type="CDD" id="cd02776">
    <property type="entry name" value="MopB_CT_Nitrate-R-NarG-like"/>
    <property type="match status" value="1"/>
</dbReference>
<dbReference type="CDD" id="cd02750">
    <property type="entry name" value="MopB_Nitrate-R-NarG-like"/>
    <property type="match status" value="1"/>
</dbReference>
<dbReference type="FunFam" id="3.40.50.12440:FF:000001">
    <property type="entry name" value="Nitrate reductase subunit alpha"/>
    <property type="match status" value="1"/>
</dbReference>
<dbReference type="Gene3D" id="3.40.50.12440">
    <property type="match status" value="1"/>
</dbReference>
<dbReference type="InterPro" id="IPR009010">
    <property type="entry name" value="Asp_de-COase-like_dom_sf"/>
</dbReference>
<dbReference type="InterPro" id="IPR037943">
    <property type="entry name" value="MopB_CT_Nitrate-R-NarG-like"/>
</dbReference>
<dbReference type="InterPro" id="IPR006657">
    <property type="entry name" value="MoPterin_dinucl-bd_dom"/>
</dbReference>
<dbReference type="InterPro" id="IPR006656">
    <property type="entry name" value="Mopterin_OxRdtase"/>
</dbReference>
<dbReference type="InterPro" id="IPR006963">
    <property type="entry name" value="Mopterin_OxRdtase_4Fe-4S_dom"/>
</dbReference>
<dbReference type="InterPro" id="IPR006655">
    <property type="entry name" value="Mopterin_OxRdtase_prok_CS"/>
</dbReference>
<dbReference type="InterPro" id="IPR027467">
    <property type="entry name" value="MopterinOxRdtase_cofactor_BS"/>
</dbReference>
<dbReference type="InterPro" id="IPR006468">
    <property type="entry name" value="NarG"/>
</dbReference>
<dbReference type="InterPro" id="IPR050123">
    <property type="entry name" value="Prok_molybdopt-oxidoreductase"/>
</dbReference>
<dbReference type="NCBIfam" id="TIGR01580">
    <property type="entry name" value="narG"/>
    <property type="match status" value="1"/>
</dbReference>
<dbReference type="PANTHER" id="PTHR43105">
    <property type="entry name" value="RESPIRATORY NITRATE REDUCTASE"/>
    <property type="match status" value="1"/>
</dbReference>
<dbReference type="PANTHER" id="PTHR43105:SF2">
    <property type="entry name" value="RESPIRATORY NITRATE REDUCTASE 2 ALPHA CHAIN"/>
    <property type="match status" value="1"/>
</dbReference>
<dbReference type="Pfam" id="PF00384">
    <property type="entry name" value="Molybdopterin"/>
    <property type="match status" value="1"/>
</dbReference>
<dbReference type="Pfam" id="PF01568">
    <property type="entry name" value="Molydop_binding"/>
    <property type="match status" value="1"/>
</dbReference>
<dbReference type="SMART" id="SM00926">
    <property type="entry name" value="Molybdop_Fe4S4"/>
    <property type="match status" value="1"/>
</dbReference>
<dbReference type="SUPFAM" id="SSF50692">
    <property type="entry name" value="ADC-like"/>
    <property type="match status" value="1"/>
</dbReference>
<dbReference type="SUPFAM" id="SSF53706">
    <property type="entry name" value="Formate dehydrogenase/DMSO reductase, domains 1-3"/>
    <property type="match status" value="1"/>
</dbReference>
<dbReference type="PROSITE" id="PS51669">
    <property type="entry name" value="4FE4S_MOW_BIS_MGD"/>
    <property type="match status" value="1"/>
</dbReference>
<dbReference type="PROSITE" id="PS00551">
    <property type="entry name" value="MOLYBDOPTERIN_PROK_1"/>
    <property type="match status" value="1"/>
</dbReference>
<dbReference type="PROSITE" id="PS00490">
    <property type="entry name" value="MOLYBDOPTERIN_PROK_2"/>
    <property type="match status" value="1"/>
</dbReference>
<organism>
    <name type="scientific">Mycobacterium tuberculosis (strain ATCC 25618 / H37Rv)</name>
    <dbReference type="NCBI Taxonomy" id="83332"/>
    <lineage>
        <taxon>Bacteria</taxon>
        <taxon>Bacillati</taxon>
        <taxon>Actinomycetota</taxon>
        <taxon>Actinomycetes</taxon>
        <taxon>Mycobacteriales</taxon>
        <taxon>Mycobacteriaceae</taxon>
        <taxon>Mycobacterium</taxon>
        <taxon>Mycobacterium tuberculosis complex</taxon>
    </lineage>
</organism>
<keyword id="KW-0004">4Fe-4S</keyword>
<keyword id="KW-0007">Acetylation</keyword>
<keyword id="KW-1003">Cell membrane</keyword>
<keyword id="KW-0249">Electron transport</keyword>
<keyword id="KW-0408">Iron</keyword>
<keyword id="KW-0411">Iron-sulfur</keyword>
<keyword id="KW-0472">Membrane</keyword>
<keyword id="KW-0479">Metal-binding</keyword>
<keyword id="KW-0500">Molybdenum</keyword>
<keyword id="KW-0534">Nitrate assimilation</keyword>
<keyword id="KW-0560">Oxidoreductase</keyword>
<keyword id="KW-1185">Reference proteome</keyword>
<keyword id="KW-0813">Transport</keyword>
<name>NARG_MYCTU</name>